<proteinExistence type="inferred from homology"/>
<gene>
    <name evidence="1" type="primary">pgi</name>
    <name type="ordered locus">MYPU_1310</name>
</gene>
<sequence>MRRIRLNLQNAINEEKLKEYVSEVEQINTKMNNLSLEGFEYLGWKDLPENINKNEIDKIIETANFFKKEGIEVLVVIGIGGSFLGAKSAMDFIQGNYPTKKNMEIIFAGTSISSTELTQLLYYVENKKFAINVISKSGTTLEPAIAFREFRNLLNSRLGENNAKRYIVATTDANKGLLFEMAKEKGYARFVVPDNVGGRFSVLTPVGLLPLACAGIDIEKLLEGAKEANALYKNSNLLENDAYKYAVARFLLQKKFPVEMLVSYEPNHMFLLEWWKQLFGESEGKQGKGILPHSAIFTRDLHSLGQFIQDGSKIMFETVIWVDKPIFDLKIEKEIEDLDKLNYLTNKSLHQINKAAFEATVEAHTKVGLVPNIILELEDSSEKTLGALFMFFERAVAMSGYLLKVNPFNQPGVEVYKSNLFKILEKK</sequence>
<feature type="chain" id="PRO_0000180687" description="Glucose-6-phosphate isomerase">
    <location>
        <begin position="1"/>
        <end position="427"/>
    </location>
</feature>
<feature type="active site" description="Proton donor" evidence="1">
    <location>
        <position position="281"/>
    </location>
</feature>
<feature type="active site" evidence="1">
    <location>
        <position position="302"/>
    </location>
</feature>
<feature type="active site" evidence="1">
    <location>
        <position position="417"/>
    </location>
</feature>
<dbReference type="EC" id="5.3.1.9" evidence="1"/>
<dbReference type="EMBL" id="AL445563">
    <property type="protein sequence ID" value="CAC13304.1"/>
    <property type="molecule type" value="Genomic_DNA"/>
</dbReference>
<dbReference type="PIR" id="C90528">
    <property type="entry name" value="C90528"/>
</dbReference>
<dbReference type="RefSeq" id="WP_010924935.1">
    <property type="nucleotide sequence ID" value="NC_002771.1"/>
</dbReference>
<dbReference type="SMR" id="Q98R79"/>
<dbReference type="STRING" id="272635.gene:17576712"/>
<dbReference type="KEGG" id="mpu:MYPU_1310"/>
<dbReference type="eggNOG" id="COG0166">
    <property type="taxonomic scope" value="Bacteria"/>
</dbReference>
<dbReference type="HOGENOM" id="CLU_037303_0_1_14"/>
<dbReference type="BioCyc" id="MPUL272635:G1GT6-130-MONOMER"/>
<dbReference type="UniPathway" id="UPA00109">
    <property type="reaction ID" value="UER00181"/>
</dbReference>
<dbReference type="UniPathway" id="UPA00138"/>
<dbReference type="Proteomes" id="UP000000528">
    <property type="component" value="Chromosome"/>
</dbReference>
<dbReference type="GO" id="GO:0005829">
    <property type="term" value="C:cytosol"/>
    <property type="evidence" value="ECO:0007669"/>
    <property type="project" value="TreeGrafter"/>
</dbReference>
<dbReference type="GO" id="GO:0097367">
    <property type="term" value="F:carbohydrate derivative binding"/>
    <property type="evidence" value="ECO:0007669"/>
    <property type="project" value="InterPro"/>
</dbReference>
<dbReference type="GO" id="GO:0004347">
    <property type="term" value="F:glucose-6-phosphate isomerase activity"/>
    <property type="evidence" value="ECO:0007669"/>
    <property type="project" value="UniProtKB-UniRule"/>
</dbReference>
<dbReference type="GO" id="GO:0048029">
    <property type="term" value="F:monosaccharide binding"/>
    <property type="evidence" value="ECO:0007669"/>
    <property type="project" value="TreeGrafter"/>
</dbReference>
<dbReference type="GO" id="GO:0006094">
    <property type="term" value="P:gluconeogenesis"/>
    <property type="evidence" value="ECO:0007669"/>
    <property type="project" value="UniProtKB-UniRule"/>
</dbReference>
<dbReference type="GO" id="GO:0051156">
    <property type="term" value="P:glucose 6-phosphate metabolic process"/>
    <property type="evidence" value="ECO:0007669"/>
    <property type="project" value="TreeGrafter"/>
</dbReference>
<dbReference type="GO" id="GO:0006096">
    <property type="term" value="P:glycolytic process"/>
    <property type="evidence" value="ECO:0007669"/>
    <property type="project" value="UniProtKB-UniRule"/>
</dbReference>
<dbReference type="CDD" id="cd05015">
    <property type="entry name" value="SIS_PGI_1"/>
    <property type="match status" value="1"/>
</dbReference>
<dbReference type="CDD" id="cd05016">
    <property type="entry name" value="SIS_PGI_2"/>
    <property type="match status" value="1"/>
</dbReference>
<dbReference type="FunFam" id="3.40.50.10490:FF:000016">
    <property type="entry name" value="Glucose-6-phosphate isomerase"/>
    <property type="match status" value="1"/>
</dbReference>
<dbReference type="Gene3D" id="3.40.50.10490">
    <property type="entry name" value="Glucose-6-phosphate isomerase like protein, domain 1"/>
    <property type="match status" value="2"/>
</dbReference>
<dbReference type="HAMAP" id="MF_00473">
    <property type="entry name" value="G6P_isomerase"/>
    <property type="match status" value="1"/>
</dbReference>
<dbReference type="InterPro" id="IPR001672">
    <property type="entry name" value="G6P_Isomerase"/>
</dbReference>
<dbReference type="InterPro" id="IPR018189">
    <property type="entry name" value="Phosphoglucose_isomerase_CS"/>
</dbReference>
<dbReference type="InterPro" id="IPR046348">
    <property type="entry name" value="SIS_dom_sf"/>
</dbReference>
<dbReference type="InterPro" id="IPR035476">
    <property type="entry name" value="SIS_PGI_1"/>
</dbReference>
<dbReference type="InterPro" id="IPR035482">
    <property type="entry name" value="SIS_PGI_2"/>
</dbReference>
<dbReference type="NCBIfam" id="NF010697">
    <property type="entry name" value="PRK14097.1"/>
    <property type="match status" value="1"/>
</dbReference>
<dbReference type="PANTHER" id="PTHR11469">
    <property type="entry name" value="GLUCOSE-6-PHOSPHATE ISOMERASE"/>
    <property type="match status" value="1"/>
</dbReference>
<dbReference type="PANTHER" id="PTHR11469:SF1">
    <property type="entry name" value="GLUCOSE-6-PHOSPHATE ISOMERASE"/>
    <property type="match status" value="1"/>
</dbReference>
<dbReference type="Pfam" id="PF00342">
    <property type="entry name" value="PGI"/>
    <property type="match status" value="1"/>
</dbReference>
<dbReference type="PRINTS" id="PR00662">
    <property type="entry name" value="G6PISOMERASE"/>
</dbReference>
<dbReference type="SUPFAM" id="SSF53697">
    <property type="entry name" value="SIS domain"/>
    <property type="match status" value="1"/>
</dbReference>
<dbReference type="PROSITE" id="PS00765">
    <property type="entry name" value="P_GLUCOSE_ISOMERASE_1"/>
    <property type="match status" value="1"/>
</dbReference>
<dbReference type="PROSITE" id="PS00174">
    <property type="entry name" value="P_GLUCOSE_ISOMERASE_2"/>
    <property type="match status" value="1"/>
</dbReference>
<dbReference type="PROSITE" id="PS51463">
    <property type="entry name" value="P_GLUCOSE_ISOMERASE_3"/>
    <property type="match status" value="1"/>
</dbReference>
<protein>
    <recommendedName>
        <fullName evidence="1">Glucose-6-phosphate isomerase</fullName>
        <shortName evidence="1">GPI</shortName>
        <ecNumber evidence="1">5.3.1.9</ecNumber>
    </recommendedName>
    <alternativeName>
        <fullName evidence="1">Phosphoglucose isomerase</fullName>
        <shortName evidence="1">PGI</shortName>
    </alternativeName>
    <alternativeName>
        <fullName evidence="1">Phosphohexose isomerase</fullName>
        <shortName evidence="1">PHI</shortName>
    </alternativeName>
</protein>
<keyword id="KW-0963">Cytoplasm</keyword>
<keyword id="KW-0312">Gluconeogenesis</keyword>
<keyword id="KW-0324">Glycolysis</keyword>
<keyword id="KW-0413">Isomerase</keyword>
<keyword id="KW-1185">Reference proteome</keyword>
<reference key="1">
    <citation type="journal article" date="2001" name="Nucleic Acids Res.">
        <title>The complete genome sequence of the murine respiratory pathogen Mycoplasma pulmonis.</title>
        <authorList>
            <person name="Chambaud I."/>
            <person name="Heilig R."/>
            <person name="Ferris S."/>
            <person name="Barbe V."/>
            <person name="Samson D."/>
            <person name="Galisson F."/>
            <person name="Moszer I."/>
            <person name="Dybvig K."/>
            <person name="Wroblewski H."/>
            <person name="Viari A."/>
            <person name="Rocha E.P.C."/>
            <person name="Blanchard A."/>
        </authorList>
    </citation>
    <scope>NUCLEOTIDE SEQUENCE [LARGE SCALE GENOMIC DNA]</scope>
    <source>
        <strain>UAB CTIP</strain>
    </source>
</reference>
<accession>Q98R79</accession>
<organism>
    <name type="scientific">Mycoplasmopsis pulmonis (strain UAB CTIP)</name>
    <name type="common">Mycoplasma pulmonis</name>
    <dbReference type="NCBI Taxonomy" id="272635"/>
    <lineage>
        <taxon>Bacteria</taxon>
        <taxon>Bacillati</taxon>
        <taxon>Mycoplasmatota</taxon>
        <taxon>Mycoplasmoidales</taxon>
        <taxon>Metamycoplasmataceae</taxon>
        <taxon>Mycoplasmopsis</taxon>
    </lineage>
</organism>
<comment type="function">
    <text evidence="1">Catalyzes the reversible isomerization of glucose-6-phosphate to fructose-6-phosphate.</text>
</comment>
<comment type="catalytic activity">
    <reaction evidence="1">
        <text>alpha-D-glucose 6-phosphate = beta-D-fructose 6-phosphate</text>
        <dbReference type="Rhea" id="RHEA:11816"/>
        <dbReference type="ChEBI" id="CHEBI:57634"/>
        <dbReference type="ChEBI" id="CHEBI:58225"/>
        <dbReference type="EC" id="5.3.1.9"/>
    </reaction>
</comment>
<comment type="pathway">
    <text evidence="1">Carbohydrate biosynthesis; gluconeogenesis.</text>
</comment>
<comment type="pathway">
    <text evidence="1">Carbohydrate degradation; glycolysis; D-glyceraldehyde 3-phosphate and glycerone phosphate from D-glucose: step 2/4.</text>
</comment>
<comment type="subcellular location">
    <subcellularLocation>
        <location evidence="1">Cytoplasm</location>
    </subcellularLocation>
</comment>
<comment type="similarity">
    <text evidence="1 2">Belongs to the GPI family.</text>
</comment>
<name>G6PI_MYCPU</name>
<evidence type="ECO:0000255" key="1">
    <source>
        <dbReference type="HAMAP-Rule" id="MF_00473"/>
    </source>
</evidence>
<evidence type="ECO:0000305" key="2"/>